<dbReference type="EMBL" id="D13303">
    <property type="protein sequence ID" value="BAA02561.1"/>
    <property type="molecule type" value="Genomic_DNA"/>
</dbReference>
<dbReference type="EMBL" id="AL009126">
    <property type="protein sequence ID" value="CAB11878.2"/>
    <property type="molecule type" value="Genomic_DNA"/>
</dbReference>
<dbReference type="PIR" id="S39860">
    <property type="entry name" value="S39860"/>
</dbReference>
<dbReference type="RefSeq" id="NP_387983.2">
    <property type="nucleotide sequence ID" value="NC_000964.3"/>
</dbReference>
<dbReference type="RefSeq" id="WP_003156430.1">
    <property type="nucleotide sequence ID" value="NZ_OZ025638.1"/>
</dbReference>
<dbReference type="PDB" id="3J3V">
    <property type="method" value="EM"/>
    <property type="resolution" value="13.30 A"/>
    <property type="chains" value="6=1-141"/>
</dbReference>
<dbReference type="PDB" id="3J3W">
    <property type="method" value="EM"/>
    <property type="resolution" value="10.70 A"/>
    <property type="chains" value="6=1-141"/>
</dbReference>
<dbReference type="PDB" id="3J9W">
    <property type="method" value="EM"/>
    <property type="resolution" value="3.90 A"/>
    <property type="chains" value="BK=1-141"/>
</dbReference>
<dbReference type="PDB" id="7AQC">
    <property type="method" value="EM"/>
    <property type="resolution" value="2.99 A"/>
    <property type="chains" value="I=1-141"/>
</dbReference>
<dbReference type="PDB" id="7AQD">
    <property type="method" value="EM"/>
    <property type="resolution" value="3.10 A"/>
    <property type="chains" value="I=1-141"/>
</dbReference>
<dbReference type="PDB" id="7AS8">
    <property type="method" value="EM"/>
    <property type="resolution" value="2.90 A"/>
    <property type="chains" value="K=1-141"/>
</dbReference>
<dbReference type="PDB" id="7AS9">
    <property type="method" value="EM"/>
    <property type="resolution" value="3.50 A"/>
    <property type="chains" value="K=1-141"/>
</dbReference>
<dbReference type="PDB" id="7ASA">
    <property type="method" value="EM"/>
    <property type="resolution" value="3.50 A"/>
    <property type="chains" value="K=1-141"/>
</dbReference>
<dbReference type="PDB" id="7O5B">
    <property type="method" value="EM"/>
    <property type="resolution" value="3.33 A"/>
    <property type="chains" value="q=1-141"/>
</dbReference>
<dbReference type="PDB" id="7OPE">
    <property type="method" value="EM"/>
    <property type="resolution" value="3.20 A"/>
    <property type="chains" value="K=1-141"/>
</dbReference>
<dbReference type="PDB" id="7QGU">
    <property type="method" value="EM"/>
    <property type="resolution" value="4.75 A"/>
    <property type="chains" value="I=1-141"/>
</dbReference>
<dbReference type="PDB" id="7QH4">
    <property type="method" value="EM"/>
    <property type="resolution" value="5.45 A"/>
    <property type="chains" value="I=1-141"/>
</dbReference>
<dbReference type="PDBsum" id="3J3V"/>
<dbReference type="PDBsum" id="3J3W"/>
<dbReference type="PDBsum" id="3J9W"/>
<dbReference type="PDBsum" id="7AQC"/>
<dbReference type="PDBsum" id="7AQD"/>
<dbReference type="PDBsum" id="7AS8"/>
<dbReference type="PDBsum" id="7AS9"/>
<dbReference type="PDBsum" id="7ASA"/>
<dbReference type="PDBsum" id="7O5B"/>
<dbReference type="PDBsum" id="7OPE"/>
<dbReference type="PDBsum" id="7QGU"/>
<dbReference type="PDBsum" id="7QH4"/>
<dbReference type="EMDB" id="EMD-11862"/>
<dbReference type="EMDB" id="EMD-11864"/>
<dbReference type="EMDB" id="EMD-11889"/>
<dbReference type="EMDB" id="EMD-11890"/>
<dbReference type="EMDB" id="EMD-11891"/>
<dbReference type="EMDB" id="EMD-12734"/>
<dbReference type="EMDB" id="EMD-13017"/>
<dbReference type="SMR" id="Q06796"/>
<dbReference type="FunCoup" id="Q06796">
    <property type="interactions" value="744"/>
</dbReference>
<dbReference type="IntAct" id="Q06796">
    <property type="interactions" value="21"/>
</dbReference>
<dbReference type="STRING" id="224308.BSU01020"/>
<dbReference type="jPOST" id="Q06796"/>
<dbReference type="PaxDb" id="224308-BSU01020"/>
<dbReference type="EnsemblBacteria" id="CAB11878">
    <property type="protein sequence ID" value="CAB11878"/>
    <property type="gene ID" value="BSU_01020"/>
</dbReference>
<dbReference type="GeneID" id="93079266"/>
<dbReference type="GeneID" id="936838"/>
<dbReference type="KEGG" id="bsu:BSU01020"/>
<dbReference type="PATRIC" id="fig|224308.179.peg.105"/>
<dbReference type="eggNOG" id="COG0080">
    <property type="taxonomic scope" value="Bacteria"/>
</dbReference>
<dbReference type="InParanoid" id="Q06796"/>
<dbReference type="OrthoDB" id="9802408at2"/>
<dbReference type="PhylomeDB" id="Q06796"/>
<dbReference type="BioCyc" id="BSUB:BSU01020-MONOMER"/>
<dbReference type="EvolutionaryTrace" id="Q06796"/>
<dbReference type="PRO" id="PR:Q06796"/>
<dbReference type="Proteomes" id="UP000001570">
    <property type="component" value="Chromosome"/>
</dbReference>
<dbReference type="GO" id="GO:0022625">
    <property type="term" value="C:cytosolic large ribosomal subunit"/>
    <property type="evidence" value="ECO:0000318"/>
    <property type="project" value="GO_Central"/>
</dbReference>
<dbReference type="GO" id="GO:0070180">
    <property type="term" value="F:large ribosomal subunit rRNA binding"/>
    <property type="evidence" value="ECO:0000318"/>
    <property type="project" value="GO_Central"/>
</dbReference>
<dbReference type="GO" id="GO:0003735">
    <property type="term" value="F:structural constituent of ribosome"/>
    <property type="evidence" value="ECO:0000318"/>
    <property type="project" value="GO_Central"/>
</dbReference>
<dbReference type="GO" id="GO:0046677">
    <property type="term" value="P:response to antibiotic"/>
    <property type="evidence" value="ECO:0007669"/>
    <property type="project" value="UniProtKB-KW"/>
</dbReference>
<dbReference type="GO" id="GO:0006412">
    <property type="term" value="P:translation"/>
    <property type="evidence" value="ECO:0000318"/>
    <property type="project" value="GO_Central"/>
</dbReference>
<dbReference type="CDD" id="cd00349">
    <property type="entry name" value="Ribosomal_L11"/>
    <property type="match status" value="1"/>
</dbReference>
<dbReference type="FunFam" id="1.10.10.250:FF:000001">
    <property type="entry name" value="50S ribosomal protein L11"/>
    <property type="match status" value="1"/>
</dbReference>
<dbReference type="FunFam" id="3.30.1550.10:FF:000001">
    <property type="entry name" value="50S ribosomal protein L11"/>
    <property type="match status" value="1"/>
</dbReference>
<dbReference type="Gene3D" id="1.10.10.250">
    <property type="entry name" value="Ribosomal protein L11, C-terminal domain"/>
    <property type="match status" value="1"/>
</dbReference>
<dbReference type="Gene3D" id="3.30.1550.10">
    <property type="entry name" value="Ribosomal protein L11/L12, N-terminal domain"/>
    <property type="match status" value="1"/>
</dbReference>
<dbReference type="HAMAP" id="MF_00736">
    <property type="entry name" value="Ribosomal_uL11"/>
    <property type="match status" value="1"/>
</dbReference>
<dbReference type="InterPro" id="IPR000911">
    <property type="entry name" value="Ribosomal_uL11"/>
</dbReference>
<dbReference type="InterPro" id="IPR006519">
    <property type="entry name" value="Ribosomal_uL11_bac-typ"/>
</dbReference>
<dbReference type="InterPro" id="IPR020783">
    <property type="entry name" value="Ribosomal_uL11_C"/>
</dbReference>
<dbReference type="InterPro" id="IPR036769">
    <property type="entry name" value="Ribosomal_uL11_C_sf"/>
</dbReference>
<dbReference type="InterPro" id="IPR020785">
    <property type="entry name" value="Ribosomal_uL11_CS"/>
</dbReference>
<dbReference type="InterPro" id="IPR020784">
    <property type="entry name" value="Ribosomal_uL11_N"/>
</dbReference>
<dbReference type="InterPro" id="IPR036796">
    <property type="entry name" value="Ribosomal_uL11_N_sf"/>
</dbReference>
<dbReference type="NCBIfam" id="TIGR01632">
    <property type="entry name" value="L11_bact"/>
    <property type="match status" value="1"/>
</dbReference>
<dbReference type="PANTHER" id="PTHR11661">
    <property type="entry name" value="60S RIBOSOMAL PROTEIN L12"/>
    <property type="match status" value="1"/>
</dbReference>
<dbReference type="PANTHER" id="PTHR11661:SF1">
    <property type="entry name" value="LARGE RIBOSOMAL SUBUNIT PROTEIN UL11M"/>
    <property type="match status" value="1"/>
</dbReference>
<dbReference type="Pfam" id="PF00298">
    <property type="entry name" value="Ribosomal_L11"/>
    <property type="match status" value="1"/>
</dbReference>
<dbReference type="Pfam" id="PF03946">
    <property type="entry name" value="Ribosomal_L11_N"/>
    <property type="match status" value="1"/>
</dbReference>
<dbReference type="SMART" id="SM00649">
    <property type="entry name" value="RL11"/>
    <property type="match status" value="1"/>
</dbReference>
<dbReference type="SUPFAM" id="SSF54747">
    <property type="entry name" value="Ribosomal L11/L12e N-terminal domain"/>
    <property type="match status" value="1"/>
</dbReference>
<dbReference type="SUPFAM" id="SSF46906">
    <property type="entry name" value="Ribosomal protein L11, C-terminal domain"/>
    <property type="match status" value="1"/>
</dbReference>
<dbReference type="PROSITE" id="PS00359">
    <property type="entry name" value="RIBOSOMAL_L11"/>
    <property type="match status" value="1"/>
</dbReference>
<keyword id="KW-0002">3D-structure</keyword>
<keyword id="KW-0046">Antibiotic resistance</keyword>
<keyword id="KW-0488">Methylation</keyword>
<keyword id="KW-1185">Reference proteome</keyword>
<keyword id="KW-0687">Ribonucleoprotein</keyword>
<keyword id="KW-0689">Ribosomal protein</keyword>
<keyword id="KW-0694">RNA-binding</keyword>
<keyword id="KW-0699">rRNA-binding</keyword>
<gene>
    <name evidence="2" type="primary">rplK</name>
    <name type="synonym">relC</name>
    <name type="synonym">tsp6</name>
    <name type="ordered locus">BSU01020</name>
</gene>
<comment type="function">
    <text evidence="2 5">Forms part of the ribosomal stalk which helps the ribosome interact with GTP-bound translation factors. Required to recruit RqcH, which is part of the ribosome quality control system (RQC), to stalled 50S ribosomal subunits (PubMed:34255840).</text>
</comment>
<comment type="subunit">
    <text evidence="2 3 4 5">Part of the ribosomal stalk of the 50S ribosomal subunit. Interacts with L10 and the large rRNA to form the base of the stalk. L10 forms an elongated spine to which 2 L12 dimers bind in a sequential fashion forming a pentameric L10(L12)2(L12)2 complex. In stalled/isolated 50S subunits interacts with RqcH (PubMed:33259811, PubMed:33259810, PubMed:34255840).</text>
</comment>
<comment type="PTM">
    <text evidence="2">One or more lysine residues are methylated.</text>
</comment>
<comment type="disruption phenotype">
    <text evidence="5">Depletion gives a strong growth defect, a ssrA deletion and rplK depletion is synthetically lethal. RqcH is no longer recruited to 50S ribosomes, no change in RqcP recruitment.</text>
</comment>
<comment type="miscellaneous">
    <text evidence="6">An unidentified mutation in this gene gives rise to thiostrepton resistance.</text>
</comment>
<comment type="similarity">
    <text evidence="2">Belongs to the universal ribosomal protein uL11 family.</text>
</comment>
<protein>
    <recommendedName>
        <fullName evidence="2">Large ribosomal subunit protein uL11</fullName>
    </recommendedName>
    <alternativeName>
        <fullName evidence="7">50S ribosomal protein L11</fullName>
        <shortName>BL11</shortName>
    </alternativeName>
</protein>
<accession>Q06796</accession>
<proteinExistence type="evidence at protein level"/>
<feature type="initiator methionine" description="Removed" evidence="1">
    <location>
        <position position="1"/>
    </location>
</feature>
<feature type="chain" id="PRO_0000104245" description="Large ribosomal subunit protein uL11">
    <location>
        <begin position="2"/>
        <end position="141"/>
    </location>
</feature>
<feature type="sequence conflict" description="In Ref. 1; BAA02561." evidence="7" ref="1">
    <original>I</original>
    <variation>V</variation>
    <location>
        <position position="35"/>
    </location>
</feature>
<feature type="strand" evidence="15">
    <location>
        <begin position="10"/>
        <end position="16"/>
    </location>
</feature>
<feature type="helix" evidence="15">
    <location>
        <begin position="21"/>
        <end position="29"/>
    </location>
</feature>
<feature type="turn" evidence="15">
    <location>
        <begin position="30"/>
        <end position="32"/>
    </location>
</feature>
<feature type="helix" evidence="15">
    <location>
        <begin position="35"/>
        <end position="45"/>
    </location>
</feature>
<feature type="turn" evidence="14">
    <location>
        <begin position="48"/>
        <end position="51"/>
    </location>
</feature>
<feature type="strand" evidence="15">
    <location>
        <begin position="53"/>
        <end position="61"/>
    </location>
</feature>
<feature type="turn" evidence="15">
    <location>
        <begin position="62"/>
        <end position="64"/>
    </location>
</feature>
<feature type="strand" evidence="15">
    <location>
        <begin position="65"/>
        <end position="70"/>
    </location>
</feature>
<feature type="helix" evidence="15">
    <location>
        <begin position="75"/>
        <end position="83"/>
    </location>
</feature>
<feature type="turn" evidence="15">
    <location>
        <begin position="92"/>
        <end position="94"/>
    </location>
</feature>
<feature type="strand" evidence="15">
    <location>
        <begin position="98"/>
        <end position="101"/>
    </location>
</feature>
<feature type="helix" evidence="15">
    <location>
        <begin position="102"/>
        <end position="112"/>
    </location>
</feature>
<feature type="turn" evidence="15">
    <location>
        <begin position="113"/>
        <end position="115"/>
    </location>
</feature>
<feature type="strand" evidence="16">
    <location>
        <begin position="118"/>
        <end position="120"/>
    </location>
</feature>
<feature type="helix" evidence="15">
    <location>
        <begin position="121"/>
        <end position="135"/>
    </location>
</feature>
<feature type="strand" evidence="15">
    <location>
        <begin position="137"/>
        <end position="140"/>
    </location>
</feature>
<organism>
    <name type="scientific">Bacillus subtilis (strain 168)</name>
    <dbReference type="NCBI Taxonomy" id="224308"/>
    <lineage>
        <taxon>Bacteria</taxon>
        <taxon>Bacillati</taxon>
        <taxon>Bacillota</taxon>
        <taxon>Bacilli</taxon>
        <taxon>Bacillales</taxon>
        <taxon>Bacillaceae</taxon>
        <taxon>Bacillus</taxon>
    </lineage>
</organism>
<name>RL11_BACSU</name>
<reference key="1">
    <citation type="journal article" date="1993" name="Mol. Microbiol.">
        <title>Isolation and characterization of the secE homologue gene of Bacillus subtilis.</title>
        <authorList>
            <person name="Jeong S."/>
            <person name="Yoshikawa H."/>
            <person name="Takahashi H."/>
        </authorList>
    </citation>
    <scope>NUCLEOTIDE SEQUENCE [GENOMIC DNA]</scope>
    <scope>ANTIBIOTIC RESISTANCE</scope>
</reference>
<reference key="2">
    <citation type="journal article" date="1997" name="Nature">
        <title>The complete genome sequence of the Gram-positive bacterium Bacillus subtilis.</title>
        <authorList>
            <person name="Kunst F."/>
            <person name="Ogasawara N."/>
            <person name="Moszer I."/>
            <person name="Albertini A.M."/>
            <person name="Alloni G."/>
            <person name="Azevedo V."/>
            <person name="Bertero M.G."/>
            <person name="Bessieres P."/>
            <person name="Bolotin A."/>
            <person name="Borchert S."/>
            <person name="Borriss R."/>
            <person name="Boursier L."/>
            <person name="Brans A."/>
            <person name="Braun M."/>
            <person name="Brignell S.C."/>
            <person name="Bron S."/>
            <person name="Brouillet S."/>
            <person name="Bruschi C.V."/>
            <person name="Caldwell B."/>
            <person name="Capuano V."/>
            <person name="Carter N.M."/>
            <person name="Choi S.-K."/>
            <person name="Codani J.-J."/>
            <person name="Connerton I.F."/>
            <person name="Cummings N.J."/>
            <person name="Daniel R.A."/>
            <person name="Denizot F."/>
            <person name="Devine K.M."/>
            <person name="Duesterhoeft A."/>
            <person name="Ehrlich S.D."/>
            <person name="Emmerson P.T."/>
            <person name="Entian K.-D."/>
            <person name="Errington J."/>
            <person name="Fabret C."/>
            <person name="Ferrari E."/>
            <person name="Foulger D."/>
            <person name="Fritz C."/>
            <person name="Fujita M."/>
            <person name="Fujita Y."/>
            <person name="Fuma S."/>
            <person name="Galizzi A."/>
            <person name="Galleron N."/>
            <person name="Ghim S.-Y."/>
            <person name="Glaser P."/>
            <person name="Goffeau A."/>
            <person name="Golightly E.J."/>
            <person name="Grandi G."/>
            <person name="Guiseppi G."/>
            <person name="Guy B.J."/>
            <person name="Haga K."/>
            <person name="Haiech J."/>
            <person name="Harwood C.R."/>
            <person name="Henaut A."/>
            <person name="Hilbert H."/>
            <person name="Holsappel S."/>
            <person name="Hosono S."/>
            <person name="Hullo M.-F."/>
            <person name="Itaya M."/>
            <person name="Jones L.-M."/>
            <person name="Joris B."/>
            <person name="Karamata D."/>
            <person name="Kasahara Y."/>
            <person name="Klaerr-Blanchard M."/>
            <person name="Klein C."/>
            <person name="Kobayashi Y."/>
            <person name="Koetter P."/>
            <person name="Koningstein G."/>
            <person name="Krogh S."/>
            <person name="Kumano M."/>
            <person name="Kurita K."/>
            <person name="Lapidus A."/>
            <person name="Lardinois S."/>
            <person name="Lauber J."/>
            <person name="Lazarevic V."/>
            <person name="Lee S.-M."/>
            <person name="Levine A."/>
            <person name="Liu H."/>
            <person name="Masuda S."/>
            <person name="Mauel C."/>
            <person name="Medigue C."/>
            <person name="Medina N."/>
            <person name="Mellado R.P."/>
            <person name="Mizuno M."/>
            <person name="Moestl D."/>
            <person name="Nakai S."/>
            <person name="Noback M."/>
            <person name="Noone D."/>
            <person name="O'Reilly M."/>
            <person name="Ogawa K."/>
            <person name="Ogiwara A."/>
            <person name="Oudega B."/>
            <person name="Park S.-H."/>
            <person name="Parro V."/>
            <person name="Pohl T.M."/>
            <person name="Portetelle D."/>
            <person name="Porwollik S."/>
            <person name="Prescott A.M."/>
            <person name="Presecan E."/>
            <person name="Pujic P."/>
            <person name="Purnelle B."/>
            <person name="Rapoport G."/>
            <person name="Rey M."/>
            <person name="Reynolds S."/>
            <person name="Rieger M."/>
            <person name="Rivolta C."/>
            <person name="Rocha E."/>
            <person name="Roche B."/>
            <person name="Rose M."/>
            <person name="Sadaie Y."/>
            <person name="Sato T."/>
            <person name="Scanlan E."/>
            <person name="Schleich S."/>
            <person name="Schroeter R."/>
            <person name="Scoffone F."/>
            <person name="Sekiguchi J."/>
            <person name="Sekowska A."/>
            <person name="Seror S.J."/>
            <person name="Serror P."/>
            <person name="Shin B.-S."/>
            <person name="Soldo B."/>
            <person name="Sorokin A."/>
            <person name="Tacconi E."/>
            <person name="Takagi T."/>
            <person name="Takahashi H."/>
            <person name="Takemaru K."/>
            <person name="Takeuchi M."/>
            <person name="Tamakoshi A."/>
            <person name="Tanaka T."/>
            <person name="Terpstra P."/>
            <person name="Tognoni A."/>
            <person name="Tosato V."/>
            <person name="Uchiyama S."/>
            <person name="Vandenbol M."/>
            <person name="Vannier F."/>
            <person name="Vassarotti A."/>
            <person name="Viari A."/>
            <person name="Wambutt R."/>
            <person name="Wedler E."/>
            <person name="Wedler H."/>
            <person name="Weitzenegger T."/>
            <person name="Winters P."/>
            <person name="Wipat A."/>
            <person name="Yamamoto H."/>
            <person name="Yamane K."/>
            <person name="Yasumoto K."/>
            <person name="Yata K."/>
            <person name="Yoshida K."/>
            <person name="Yoshikawa H.-F."/>
            <person name="Zumstein E."/>
            <person name="Yoshikawa H."/>
            <person name="Danchin A."/>
        </authorList>
    </citation>
    <scope>NUCLEOTIDE SEQUENCE [LARGE SCALE GENOMIC DNA]</scope>
    <source>
        <strain>168</strain>
    </source>
</reference>
<reference key="3">
    <citation type="journal article" date="2009" name="Microbiology">
        <title>From a consortium sequence to a unified sequence: the Bacillus subtilis 168 reference genome a decade later.</title>
        <authorList>
            <person name="Barbe V."/>
            <person name="Cruveiller S."/>
            <person name="Kunst F."/>
            <person name="Lenoble P."/>
            <person name="Meurice G."/>
            <person name="Sekowska A."/>
            <person name="Vallenet D."/>
            <person name="Wang T."/>
            <person name="Moszer I."/>
            <person name="Medigue C."/>
            <person name="Danchin A."/>
        </authorList>
    </citation>
    <scope>SEQUENCE REVISION TO 35</scope>
</reference>
<reference evidence="8 9" key="4">
    <citation type="journal article" date="2021" name="Mol. Cell">
        <title>Mimicry of Canonical Translation Elongation Underlies Alanine Tail Synthesis in RQC.</title>
        <authorList>
            <person name="Filbeck S."/>
            <person name="Cerullo F."/>
            <person name="Paternoga H."/>
            <person name="Tsaprailis G."/>
            <person name="Joazeiro C.A.P."/>
            <person name="Pfeffer S."/>
        </authorList>
    </citation>
    <scope>STRUCTURE BY ELECTRON MICROSCOPY (2.99 ANGSTROMS) OF 50S RIBOSOMAL SUBUNIT</scope>
    <scope>SUBUNIT</scope>
    <scope>INTERACTION WITH RQCH</scope>
    <source>
        <strain>168</strain>
    </source>
</reference>
<reference evidence="10 11 12" key="5">
    <citation type="journal article" date="2021" name="Mol. Cell">
        <title>Structural Basis for Bacterial Ribosome-Associated Quality Control by RqcH and RqcP.</title>
        <authorList>
            <person name="Crowe-McAuliffe C."/>
            <person name="Takada H."/>
            <person name="Murina V."/>
            <person name="Polte C."/>
            <person name="Kasvandik S."/>
            <person name="Tenson T."/>
            <person name="Ignatova Z."/>
            <person name="Atkinson G.C."/>
            <person name="Wilson D.N."/>
            <person name="Hauryliuk V."/>
        </authorList>
    </citation>
    <scope>STRUCTURE BY ELECTRON MICROSCOPY (2.90 ANGSTROMS) OF 50S RIBOSOMAL SUBUNIT</scope>
    <scope>SUBUNIT</scope>
    <scope>INTERACTION WITH RQCH</scope>
    <source>
        <strain>168</strain>
    </source>
</reference>
<reference evidence="13" key="6">
    <citation type="journal article" date="2021" name="Nucleic Acids Res.">
        <title>RqcH and RqcP catalyze processive poly-alanine synthesis in a reconstituted ribosome-associated quality control system.</title>
        <authorList>
            <person name="Takada H."/>
            <person name="Crowe-McAuliffe C."/>
            <person name="Polte C."/>
            <person name="Sidorova Z.Y."/>
            <person name="Murina V."/>
            <person name="Atkinson G.C."/>
            <person name="Konevega A.L."/>
            <person name="Ignatova Z."/>
            <person name="Wilson D.N."/>
            <person name="Hauryliuk V."/>
        </authorList>
    </citation>
    <scope>STRUCTURE BY ELECTRON MICROSCOPY (3.20 ANGSTROMS) OF 50S RIBOSOMAL SUBUNIT</scope>
    <scope>FUNCTION</scope>
    <scope>INTERACTION WITH RQCH</scope>
    <scope>DISRUPTION PHENOTYPE</scope>
    <source>
        <strain>168</strain>
    </source>
</reference>
<sequence>MAKKVVKVVKLQIPAGKANPAPPVGPALGQAGVNIMGFCKEFNARTADQAGLIIPVEISVYEDRSFTFITKTPPAAVLLKKAAGIESGSGEPNRNKVATVKRDKVREIAETKMPDLNAADVEAAMRMVEGTARSMGIVIED</sequence>
<evidence type="ECO:0000250" key="1"/>
<evidence type="ECO:0000255" key="2">
    <source>
        <dbReference type="HAMAP-Rule" id="MF_00736"/>
    </source>
</evidence>
<evidence type="ECO:0000269" key="3">
    <source>
    </source>
</evidence>
<evidence type="ECO:0000269" key="4">
    <source>
    </source>
</evidence>
<evidence type="ECO:0000269" key="5">
    <source>
    </source>
</evidence>
<evidence type="ECO:0000269" key="6">
    <source>
    </source>
</evidence>
<evidence type="ECO:0000305" key="7"/>
<evidence type="ECO:0007744" key="8">
    <source>
        <dbReference type="PDB" id="7AQC"/>
    </source>
</evidence>
<evidence type="ECO:0007744" key="9">
    <source>
        <dbReference type="PDB" id="7AQD"/>
    </source>
</evidence>
<evidence type="ECO:0007744" key="10">
    <source>
        <dbReference type="PDB" id="7AS8"/>
    </source>
</evidence>
<evidence type="ECO:0007744" key="11">
    <source>
        <dbReference type="PDB" id="7AS9"/>
    </source>
</evidence>
<evidence type="ECO:0007744" key="12">
    <source>
        <dbReference type="PDB" id="7ASA"/>
    </source>
</evidence>
<evidence type="ECO:0007744" key="13">
    <source>
        <dbReference type="PDB" id="7OPE"/>
    </source>
</evidence>
<evidence type="ECO:0007829" key="14">
    <source>
        <dbReference type="PDB" id="7AQC"/>
    </source>
</evidence>
<evidence type="ECO:0007829" key="15">
    <source>
        <dbReference type="PDB" id="7AS8"/>
    </source>
</evidence>
<evidence type="ECO:0007829" key="16">
    <source>
        <dbReference type="PDB" id="7AS9"/>
    </source>
</evidence>